<evidence type="ECO:0000255" key="1">
    <source>
        <dbReference type="HAMAP-Rule" id="MF_00022"/>
    </source>
</evidence>
<name>SYE_CHLCV</name>
<dbReference type="EC" id="6.1.1.17" evidence="1"/>
<dbReference type="EMBL" id="U41759">
    <property type="protein sequence ID" value="AAB41141.1"/>
    <property type="molecule type" value="Genomic_DNA"/>
</dbReference>
<dbReference type="EMBL" id="AE015925">
    <property type="protein sequence ID" value="AAP04933.1"/>
    <property type="molecule type" value="Genomic_DNA"/>
</dbReference>
<dbReference type="PIR" id="JC5208">
    <property type="entry name" value="JC5208"/>
</dbReference>
<dbReference type="RefSeq" id="WP_011006154.1">
    <property type="nucleotide sequence ID" value="NC_003361.3"/>
</dbReference>
<dbReference type="SMR" id="P59690"/>
<dbReference type="STRING" id="227941.CCA_00182"/>
<dbReference type="KEGG" id="cca:CCA_00182"/>
<dbReference type="eggNOG" id="COG0008">
    <property type="taxonomic scope" value="Bacteria"/>
</dbReference>
<dbReference type="HOGENOM" id="CLU_015768_6_3_0"/>
<dbReference type="OrthoDB" id="9807503at2"/>
<dbReference type="Proteomes" id="UP000002193">
    <property type="component" value="Chromosome"/>
</dbReference>
<dbReference type="GO" id="GO:0005829">
    <property type="term" value="C:cytosol"/>
    <property type="evidence" value="ECO:0007669"/>
    <property type="project" value="TreeGrafter"/>
</dbReference>
<dbReference type="GO" id="GO:0005524">
    <property type="term" value="F:ATP binding"/>
    <property type="evidence" value="ECO:0007669"/>
    <property type="project" value="UniProtKB-UniRule"/>
</dbReference>
<dbReference type="GO" id="GO:0004818">
    <property type="term" value="F:glutamate-tRNA ligase activity"/>
    <property type="evidence" value="ECO:0007669"/>
    <property type="project" value="UniProtKB-UniRule"/>
</dbReference>
<dbReference type="GO" id="GO:0000049">
    <property type="term" value="F:tRNA binding"/>
    <property type="evidence" value="ECO:0007669"/>
    <property type="project" value="InterPro"/>
</dbReference>
<dbReference type="GO" id="GO:0008270">
    <property type="term" value="F:zinc ion binding"/>
    <property type="evidence" value="ECO:0007669"/>
    <property type="project" value="InterPro"/>
</dbReference>
<dbReference type="GO" id="GO:0006424">
    <property type="term" value="P:glutamyl-tRNA aminoacylation"/>
    <property type="evidence" value="ECO:0007669"/>
    <property type="project" value="UniProtKB-UniRule"/>
</dbReference>
<dbReference type="CDD" id="cd00808">
    <property type="entry name" value="GluRS_core"/>
    <property type="match status" value="1"/>
</dbReference>
<dbReference type="FunFam" id="3.40.50.620:FF:000045">
    <property type="entry name" value="Glutamate--tRNA ligase, mitochondrial"/>
    <property type="match status" value="1"/>
</dbReference>
<dbReference type="Gene3D" id="1.10.10.350">
    <property type="match status" value="1"/>
</dbReference>
<dbReference type="Gene3D" id="3.40.50.620">
    <property type="entry name" value="HUPs"/>
    <property type="match status" value="1"/>
</dbReference>
<dbReference type="HAMAP" id="MF_00022">
    <property type="entry name" value="Glu_tRNA_synth_type1"/>
    <property type="match status" value="1"/>
</dbReference>
<dbReference type="InterPro" id="IPR045462">
    <property type="entry name" value="aa-tRNA-synth_I_cd-bd"/>
</dbReference>
<dbReference type="InterPro" id="IPR020751">
    <property type="entry name" value="aa-tRNA-synth_I_codon-bd_sub2"/>
</dbReference>
<dbReference type="InterPro" id="IPR001412">
    <property type="entry name" value="aa-tRNA-synth_I_CS"/>
</dbReference>
<dbReference type="InterPro" id="IPR008925">
    <property type="entry name" value="aa_tRNA-synth_I_cd-bd_sf"/>
</dbReference>
<dbReference type="InterPro" id="IPR004527">
    <property type="entry name" value="Glu-tRNA-ligase_bac/mito"/>
</dbReference>
<dbReference type="InterPro" id="IPR000924">
    <property type="entry name" value="Glu/Gln-tRNA-synth"/>
</dbReference>
<dbReference type="InterPro" id="IPR020058">
    <property type="entry name" value="Glu/Gln-tRNA-synth_Ib_cat-dom"/>
</dbReference>
<dbReference type="InterPro" id="IPR049940">
    <property type="entry name" value="GluQ/Sye"/>
</dbReference>
<dbReference type="InterPro" id="IPR033910">
    <property type="entry name" value="GluRS_core"/>
</dbReference>
<dbReference type="InterPro" id="IPR014729">
    <property type="entry name" value="Rossmann-like_a/b/a_fold"/>
</dbReference>
<dbReference type="NCBIfam" id="TIGR00464">
    <property type="entry name" value="gltX_bact"/>
    <property type="match status" value="1"/>
</dbReference>
<dbReference type="PANTHER" id="PTHR43311">
    <property type="entry name" value="GLUTAMATE--TRNA LIGASE"/>
    <property type="match status" value="1"/>
</dbReference>
<dbReference type="PANTHER" id="PTHR43311:SF2">
    <property type="entry name" value="GLUTAMATE--TRNA LIGASE, MITOCHONDRIAL-RELATED"/>
    <property type="match status" value="1"/>
</dbReference>
<dbReference type="Pfam" id="PF19269">
    <property type="entry name" value="Anticodon_2"/>
    <property type="match status" value="1"/>
</dbReference>
<dbReference type="Pfam" id="PF00749">
    <property type="entry name" value="tRNA-synt_1c"/>
    <property type="match status" value="1"/>
</dbReference>
<dbReference type="PRINTS" id="PR00987">
    <property type="entry name" value="TRNASYNTHGLU"/>
</dbReference>
<dbReference type="SUPFAM" id="SSF48163">
    <property type="entry name" value="An anticodon-binding domain of class I aminoacyl-tRNA synthetases"/>
    <property type="match status" value="1"/>
</dbReference>
<dbReference type="SUPFAM" id="SSF52374">
    <property type="entry name" value="Nucleotidylyl transferase"/>
    <property type="match status" value="1"/>
</dbReference>
<dbReference type="PROSITE" id="PS00178">
    <property type="entry name" value="AA_TRNA_LIGASE_I"/>
    <property type="match status" value="1"/>
</dbReference>
<sequence>MAWENVRVRVAPSPTGDPHVGTAYMALFNEIFAKRFNGKMILRIEDTDQTRSRDDYEKNIFSALQWCGIQWDEGPDIGGPHGPYRQSERTEIYREYAELLLKTDYAYKCFATPKELEEMRAVATTLGYRGGYDRRYRYLSPEEIEARTQEGQPYTIRLKVPLTGECVLEDYCKGRVVFPWADVDDQVLMKSDGFPTYHFANVVDDHLMGITHVLRGEEWLSSTPKHLLLYEAFGWEPPIFLHMPLLLNPDGTKLSKRKNPTSIFYYRDAGYIKEAFMNFLTLMGYSMEGDEEVYSLEKLIANFDPKRIGKSGAVFDVRKLDWMNKHYLNHEGSPENLLARLKDWLVNDEFLLKILPLCQSRMATLAEFVGLSEFFFSVLPEYSKEELLPAAISQEKAAILFYSYVKYLEKTDLWVKDQFYLGSKWLSEAFQVHHKKVVIPLLYVAITGKKQGLPLFDSMELLGKPRTRMRMVHAQNLLGGVPKKIQTAIDKVLKEENFENKILEF</sequence>
<accession>P59690</accession>
<accession>P94662</accession>
<accession>Q06560</accession>
<organism>
    <name type="scientific">Chlamydia caviae (strain ATCC VR-813 / DSM 19441 / 03DC25 / GPIC)</name>
    <name type="common">Chlamydophila caviae</name>
    <dbReference type="NCBI Taxonomy" id="227941"/>
    <lineage>
        <taxon>Bacteria</taxon>
        <taxon>Pseudomonadati</taxon>
        <taxon>Chlamydiota</taxon>
        <taxon>Chlamydiia</taxon>
        <taxon>Chlamydiales</taxon>
        <taxon>Chlamydiaceae</taxon>
        <taxon>Chlamydia/Chlamydophila group</taxon>
        <taxon>Chlamydia</taxon>
    </lineage>
</organism>
<keyword id="KW-0030">Aminoacyl-tRNA synthetase</keyword>
<keyword id="KW-0067">ATP-binding</keyword>
<keyword id="KW-0963">Cytoplasm</keyword>
<keyword id="KW-0436">Ligase</keyword>
<keyword id="KW-0547">Nucleotide-binding</keyword>
<keyword id="KW-0648">Protein biosynthesis</keyword>
<protein>
    <recommendedName>
        <fullName evidence="1">Glutamate--tRNA ligase</fullName>
        <ecNumber evidence="1">6.1.1.17</ecNumber>
    </recommendedName>
    <alternativeName>
        <fullName evidence="1">Glutamyl-tRNA synthetase</fullName>
        <shortName evidence="1">GluRS</shortName>
    </alternativeName>
</protein>
<gene>
    <name evidence="1" type="primary">gltX</name>
    <name type="ordered locus">CCA_00182</name>
</gene>
<comment type="function">
    <text evidence="1">Catalyzes the attachment of glutamate to tRNA(Glu) in a two-step reaction: glutamate is first activated by ATP to form Glu-AMP and then transferred to the acceptor end of tRNA(Glu).</text>
</comment>
<comment type="catalytic activity">
    <reaction evidence="1">
        <text>tRNA(Glu) + L-glutamate + ATP = L-glutamyl-tRNA(Glu) + AMP + diphosphate</text>
        <dbReference type="Rhea" id="RHEA:23540"/>
        <dbReference type="Rhea" id="RHEA-COMP:9663"/>
        <dbReference type="Rhea" id="RHEA-COMP:9680"/>
        <dbReference type="ChEBI" id="CHEBI:29985"/>
        <dbReference type="ChEBI" id="CHEBI:30616"/>
        <dbReference type="ChEBI" id="CHEBI:33019"/>
        <dbReference type="ChEBI" id="CHEBI:78442"/>
        <dbReference type="ChEBI" id="CHEBI:78520"/>
        <dbReference type="ChEBI" id="CHEBI:456215"/>
        <dbReference type="EC" id="6.1.1.17"/>
    </reaction>
</comment>
<comment type="subunit">
    <text evidence="1">Monomer.</text>
</comment>
<comment type="subcellular location">
    <subcellularLocation>
        <location evidence="1">Cytoplasm</location>
    </subcellularLocation>
</comment>
<comment type="similarity">
    <text evidence="1">Belongs to the class-I aminoacyl-tRNA synthetase family. Glutamate--tRNA ligase type 1 subfamily.</text>
</comment>
<reference key="1">
    <citation type="journal article" date="1996" name="Gene">
        <title>Homologs of Escherichia coli recJ, gltX and of a putative 'early' gene of avian Chlamydia psittaci are located upstream of the 'late' omp2 locus of Chlamydia psittaci strain guinea pig inclusion conjunctivitis.</title>
        <authorList>
            <person name="Hsia R.C."/>
            <person name="Bavoil P.M."/>
        </authorList>
    </citation>
    <scope>NUCLEOTIDE SEQUENCE [GENOMIC DNA]</scope>
    <source>
        <strain>ATCC VR-813 / DSM 19441 / 03DC25 / GPIC</strain>
    </source>
</reference>
<reference key="2">
    <citation type="journal article" date="2003" name="Nucleic Acids Res.">
        <title>Genome sequence of Chlamydophila caviae (Chlamydia psittaci GPIC): examining the role of niche-specific genes in the evolution of the Chlamydiaceae.</title>
        <authorList>
            <person name="Read T.D."/>
            <person name="Myers G.S.A."/>
            <person name="Brunham R.C."/>
            <person name="Nelson W.C."/>
            <person name="Paulsen I.T."/>
            <person name="Heidelberg J.F."/>
            <person name="Holtzapple E.K."/>
            <person name="Khouri H.M."/>
            <person name="Federova N.B."/>
            <person name="Carty H.A."/>
            <person name="Umayam L.A."/>
            <person name="Haft D.H."/>
            <person name="Peterson J.D."/>
            <person name="Beanan M.J."/>
            <person name="White O."/>
            <person name="Salzberg S.L."/>
            <person name="Hsia R.-C."/>
            <person name="McClarty G."/>
            <person name="Rank R.G."/>
            <person name="Bavoil P.M."/>
            <person name="Fraser C.M."/>
        </authorList>
    </citation>
    <scope>NUCLEOTIDE SEQUENCE [LARGE SCALE GENOMIC DNA]</scope>
    <source>
        <strain>ATCC VR-813 / DSM 19441 / 03DC25 / GPIC</strain>
    </source>
</reference>
<feature type="chain" id="PRO_0000119537" description="Glutamate--tRNA ligase">
    <location>
        <begin position="1"/>
        <end position="505"/>
    </location>
</feature>
<feature type="short sequence motif" description="'HIGH' region" evidence="1">
    <location>
        <begin position="12"/>
        <end position="22"/>
    </location>
</feature>
<feature type="short sequence motif" description="'KMSKS' region" evidence="1">
    <location>
        <begin position="253"/>
        <end position="257"/>
    </location>
</feature>
<feature type="binding site" evidence="1">
    <location>
        <position position="256"/>
    </location>
    <ligand>
        <name>ATP</name>
        <dbReference type="ChEBI" id="CHEBI:30616"/>
    </ligand>
</feature>
<proteinExistence type="inferred from homology"/>